<evidence type="ECO:0000250" key="1"/>
<evidence type="ECO:0000255" key="2"/>
<evidence type="ECO:0000256" key="3">
    <source>
        <dbReference type="SAM" id="MobiDB-lite"/>
    </source>
</evidence>
<evidence type="ECO:0000269" key="4">
    <source>
    </source>
</evidence>
<evidence type="ECO:0000269" key="5">
    <source>
    </source>
</evidence>
<evidence type="ECO:0000269" key="6">
    <source>
    </source>
</evidence>
<evidence type="ECO:0000303" key="7">
    <source>
    </source>
</evidence>
<evidence type="ECO:0000305" key="8"/>
<evidence type="ECO:0000312" key="9">
    <source>
        <dbReference type="Araport" id="AT3G15820"/>
    </source>
</evidence>
<evidence type="ECO:0000312" key="10">
    <source>
        <dbReference type="EMBL" id="BAB02313.1"/>
    </source>
</evidence>
<accession>Q9LVZ7</accession>
<accession>Q94JW1</accession>
<sequence length="301" mass="32977">MSAAAAETDVSLRRRSNSLNGNHTNGVAIDGTLDNNNRRVGDTNTHMDISAKKTDNGYANGVGGGGWRSKASFTTWTARDIVYVVRYHWIPCMFAAGLLFFMGVEYTLQMIPARSEPFDLGFVVTRSLNRVLASSPDLNTVLAALNTVFVGMQTTYIVWTWLVEGRARATIAALFMFTCRGILGYSTQLPLPQDFLGSGVDFPVGNVSFFLFFSGHVAGSMIASLDMRRMQRLRLAMVFDILNVLQSIRLLGTRGHYTIDLAVGVGAGILFDSLAGKYEEMMSKRHLGTGFSLISKDSLVN</sequence>
<comment type="function">
    <text evidence="4 5 6">Functions as a phosphatidylcholine:diacylglycerol cholinephosphotransferase that catalyzes the transfer of the phosphocholine headgroup from phosphatidylcholine (PC) to diacylglycerol, a major reaction for the transfer of 18:1 into phosphatidylcholine for desaturation and also for the reverse transfer of 18:2 and 18:3 into the triacylglycerols synthesis pathway.</text>
</comment>
<comment type="catalytic activity">
    <reaction evidence="4">
        <text>1,2-ditetradecanoyl-sn-glycero-3-phosphocholine + 1,2-di-(9Z-octadecenoyl)-sn-glycerol = 1,2-ditetradecanoyl-sn-glycerol + 1,2-di-(9Z-octadecenoyl)-sn-glycero-3-phosphocholine</text>
        <dbReference type="Rhea" id="RHEA:56412"/>
        <dbReference type="ChEBI" id="CHEBI:45240"/>
        <dbReference type="ChEBI" id="CHEBI:52333"/>
        <dbReference type="ChEBI" id="CHEBI:74669"/>
        <dbReference type="ChEBI" id="CHEBI:80651"/>
    </reaction>
    <physiologicalReaction direction="left-to-right" evidence="4">
        <dbReference type="Rhea" id="RHEA:56413"/>
    </physiologicalReaction>
</comment>
<comment type="biophysicochemical properties">
    <kinetics>
        <Vmax evidence="4">4.5 nmol/min/mg enzyme with phosphatidylcholine as substrate (at 23 degrees Celsius)</Vmax>
    </kinetics>
    <phDependence>
        <text evidence="4">Optimum pH is 6.5-7 at 23 degrees Celsius.</text>
    </phDependence>
</comment>
<comment type="subcellular location">
    <subcellularLocation>
        <location evidence="8">Membrane</location>
        <topology evidence="8">Multi-pass membrane protein</topology>
    </subcellularLocation>
</comment>
<comment type="disruption phenotype">
    <text evidence="4 6">Reduction of 18:2 and 18:3 triacylglycerols (TAG) accumulation in seeds by 40 percent.</text>
</comment>
<comment type="similarity">
    <text evidence="8">Belongs to the phosphatidylcholine:diacylglycerol cholinephosphotransferase family.</text>
</comment>
<comment type="sequence caution" evidence="8">
    <conflict type="erroneous initiation">
        <sequence resource="EMBL-CDS" id="AAK49592"/>
    </conflict>
    <text>Truncated N-terminus.</text>
</comment>
<dbReference type="EC" id="2.7.8.-" evidence="4"/>
<dbReference type="EMBL" id="AB017071">
    <property type="protein sequence ID" value="BAB02313.1"/>
    <property type="molecule type" value="Genomic_DNA"/>
</dbReference>
<dbReference type="EMBL" id="CP002686">
    <property type="protein sequence ID" value="AEE75730.1"/>
    <property type="molecule type" value="Genomic_DNA"/>
</dbReference>
<dbReference type="EMBL" id="AF372876">
    <property type="protein sequence ID" value="AAK49592.1"/>
    <property type="status" value="ALT_INIT"/>
    <property type="molecule type" value="mRNA"/>
</dbReference>
<dbReference type="EMBL" id="BT004552">
    <property type="protein sequence ID" value="AAO42798.1"/>
    <property type="molecule type" value="mRNA"/>
</dbReference>
<dbReference type="EMBL" id="AY086160">
    <property type="protein sequence ID" value="AAM63365.1"/>
    <property type="molecule type" value="mRNA"/>
</dbReference>
<dbReference type="RefSeq" id="NP_566527.1">
    <property type="nucleotide sequence ID" value="NM_112452.3"/>
</dbReference>
<dbReference type="BioGRID" id="6159">
    <property type="interactions" value="4"/>
</dbReference>
<dbReference type="FunCoup" id="Q9LVZ7">
    <property type="interactions" value="552"/>
</dbReference>
<dbReference type="IntAct" id="Q9LVZ7">
    <property type="interactions" value="4"/>
</dbReference>
<dbReference type="STRING" id="3702.Q9LVZ7"/>
<dbReference type="SwissLipids" id="SLP:000001901"/>
<dbReference type="iPTMnet" id="Q9LVZ7"/>
<dbReference type="PaxDb" id="3702-AT3G15820.1"/>
<dbReference type="ProteomicsDB" id="236719"/>
<dbReference type="EnsemblPlants" id="AT3G15820.1">
    <property type="protein sequence ID" value="AT3G15820.1"/>
    <property type="gene ID" value="AT3G15820"/>
</dbReference>
<dbReference type="GeneID" id="820825"/>
<dbReference type="Gramene" id="AT3G15820.1">
    <property type="protein sequence ID" value="AT3G15820.1"/>
    <property type="gene ID" value="AT3G15820"/>
</dbReference>
<dbReference type="KEGG" id="ath:AT3G15820"/>
<dbReference type="Araport" id="AT3G15820"/>
<dbReference type="TAIR" id="AT3G15820">
    <property type="gene designation" value="ROD1"/>
</dbReference>
<dbReference type="eggNOG" id="ENOG502QRYQ">
    <property type="taxonomic scope" value="Eukaryota"/>
</dbReference>
<dbReference type="HOGENOM" id="CLU_079484_0_0_1"/>
<dbReference type="InParanoid" id="Q9LVZ7"/>
<dbReference type="OMA" id="VAAMMMF"/>
<dbReference type="OrthoDB" id="1921278at2759"/>
<dbReference type="PhylomeDB" id="Q9LVZ7"/>
<dbReference type="BioCyc" id="ARA:AT3G15820-MONOMER"/>
<dbReference type="BioCyc" id="MetaCyc:AT3G15820-MONOMER"/>
<dbReference type="PRO" id="PR:Q9LVZ7"/>
<dbReference type="Proteomes" id="UP000006548">
    <property type="component" value="Chromosome 3"/>
</dbReference>
<dbReference type="ExpressionAtlas" id="Q9LVZ7">
    <property type="expression patterns" value="baseline and differential"/>
</dbReference>
<dbReference type="GO" id="GO:0016020">
    <property type="term" value="C:membrane"/>
    <property type="evidence" value="ECO:0007669"/>
    <property type="project" value="UniProtKB-SubCell"/>
</dbReference>
<dbReference type="GO" id="GO:0004142">
    <property type="term" value="F:diacylglycerol cholinephosphotransferase activity"/>
    <property type="evidence" value="ECO:0000314"/>
    <property type="project" value="TAIR"/>
</dbReference>
<dbReference type="GO" id="GO:0046470">
    <property type="term" value="P:phosphatidylcholine metabolic process"/>
    <property type="evidence" value="ECO:0000315"/>
    <property type="project" value="TAIR"/>
</dbReference>
<dbReference type="InterPro" id="IPR056361">
    <property type="entry name" value="AtPDCT1_2_TM_dom"/>
</dbReference>
<dbReference type="InterPro" id="IPR055311">
    <property type="entry name" value="PDCT1/2-like"/>
</dbReference>
<dbReference type="PANTHER" id="PTHR34674">
    <property type="entry name" value="PHOSPHATIDYLCHOLINE:DIACYLGLYCEROL CHOLINEPHOSPHOTRANSFERASE 1-RELATED"/>
    <property type="match status" value="1"/>
</dbReference>
<dbReference type="PANTHER" id="PTHR34674:SF1">
    <property type="entry name" value="PHOSPHATIDYLCHOLINE:DIACYLGLYCEROL CHOLINEPHOSPHOTRANSFERASE 1-RELATED"/>
    <property type="match status" value="1"/>
</dbReference>
<dbReference type="Pfam" id="PF24788">
    <property type="entry name" value="AtPDCT1_2"/>
    <property type="match status" value="1"/>
</dbReference>
<protein>
    <recommendedName>
        <fullName evidence="8">Phosphatidylcholine:diacylglycerol cholinephosphotransferase 1</fullName>
        <shortName evidence="8">AtPDCT1</shortName>
        <ecNumber evidence="4">2.7.8.-</ecNumber>
    </recommendedName>
    <alternativeName>
        <fullName evidence="7">Protein REDUCED OLEATE DESATURATION 1</fullName>
    </alternativeName>
</protein>
<reference key="1">
    <citation type="journal article" date="2000" name="DNA Res.">
        <title>Structural analysis of Arabidopsis thaliana chromosome 3. I. Sequence features of the regions of 4,504,864 bp covered by sixty P1 and TAC clones.</title>
        <authorList>
            <person name="Sato S."/>
            <person name="Nakamura Y."/>
            <person name="Kaneko T."/>
            <person name="Katoh T."/>
            <person name="Asamizu E."/>
            <person name="Tabata S."/>
        </authorList>
    </citation>
    <scope>NUCLEOTIDE SEQUENCE [LARGE SCALE GENOMIC DNA]</scope>
    <source>
        <strain>cv. Columbia</strain>
    </source>
</reference>
<reference key="2">
    <citation type="journal article" date="2017" name="Plant J.">
        <title>Araport11: a complete reannotation of the Arabidopsis thaliana reference genome.</title>
        <authorList>
            <person name="Cheng C.Y."/>
            <person name="Krishnakumar V."/>
            <person name="Chan A.P."/>
            <person name="Thibaud-Nissen F."/>
            <person name="Schobel S."/>
            <person name="Town C.D."/>
        </authorList>
    </citation>
    <scope>GENOME REANNOTATION</scope>
    <source>
        <strain>cv. Columbia</strain>
    </source>
</reference>
<reference key="3">
    <citation type="journal article" date="2003" name="Science">
        <title>Empirical analysis of transcriptional activity in the Arabidopsis genome.</title>
        <authorList>
            <person name="Yamada K."/>
            <person name="Lim J."/>
            <person name="Dale J.M."/>
            <person name="Chen H."/>
            <person name="Shinn P."/>
            <person name="Palm C.J."/>
            <person name="Southwick A.M."/>
            <person name="Wu H.C."/>
            <person name="Kim C.J."/>
            <person name="Nguyen M."/>
            <person name="Pham P.K."/>
            <person name="Cheuk R.F."/>
            <person name="Karlin-Newmann G."/>
            <person name="Liu S.X."/>
            <person name="Lam B."/>
            <person name="Sakano H."/>
            <person name="Wu T."/>
            <person name="Yu G."/>
            <person name="Miranda M."/>
            <person name="Quach H.L."/>
            <person name="Tripp M."/>
            <person name="Chang C.H."/>
            <person name="Lee J.M."/>
            <person name="Toriumi M.J."/>
            <person name="Chan M.M."/>
            <person name="Tang C.C."/>
            <person name="Onodera C.S."/>
            <person name="Deng J.M."/>
            <person name="Akiyama K."/>
            <person name="Ansari Y."/>
            <person name="Arakawa T."/>
            <person name="Banh J."/>
            <person name="Banno F."/>
            <person name="Bowser L."/>
            <person name="Brooks S.Y."/>
            <person name="Carninci P."/>
            <person name="Chao Q."/>
            <person name="Choy N."/>
            <person name="Enju A."/>
            <person name="Goldsmith A.D."/>
            <person name="Gurjal M."/>
            <person name="Hansen N.F."/>
            <person name="Hayashizaki Y."/>
            <person name="Johnson-Hopson C."/>
            <person name="Hsuan V.W."/>
            <person name="Iida K."/>
            <person name="Karnes M."/>
            <person name="Khan S."/>
            <person name="Koesema E."/>
            <person name="Ishida J."/>
            <person name="Jiang P.X."/>
            <person name="Jones T."/>
            <person name="Kawai J."/>
            <person name="Kamiya A."/>
            <person name="Meyers C."/>
            <person name="Nakajima M."/>
            <person name="Narusaka M."/>
            <person name="Seki M."/>
            <person name="Sakurai T."/>
            <person name="Satou M."/>
            <person name="Tamse R."/>
            <person name="Vaysberg M."/>
            <person name="Wallender E.K."/>
            <person name="Wong C."/>
            <person name="Yamamura Y."/>
            <person name="Yuan S."/>
            <person name="Shinozaki K."/>
            <person name="Davis R.W."/>
            <person name="Theologis A."/>
            <person name="Ecker J.R."/>
        </authorList>
    </citation>
    <scope>NUCLEOTIDE SEQUENCE [LARGE SCALE MRNA]</scope>
    <source>
        <strain>cv. Columbia</strain>
    </source>
</reference>
<reference key="4">
    <citation type="submission" date="2002-03" db="EMBL/GenBank/DDBJ databases">
        <title>Full-length cDNA from Arabidopsis thaliana.</title>
        <authorList>
            <person name="Brover V.V."/>
            <person name="Troukhan M.E."/>
            <person name="Alexandrov N.A."/>
            <person name="Lu Y.-P."/>
            <person name="Flavell R.B."/>
            <person name="Feldmann K.A."/>
        </authorList>
    </citation>
    <scope>NUCLEOTIDE SEQUENCE [LARGE SCALE MRNA]</scope>
</reference>
<reference key="5">
    <citation type="journal article" date="2009" name="Proc. Natl. Acad. Sci. U.S.A.">
        <title>An enzyme regulating triacylglycerol composition is encoded by the ROD1 gene of Arabidopsis.</title>
        <authorList>
            <person name="Lu C."/>
            <person name="Xin Z."/>
            <person name="Ren Z."/>
            <person name="Miquel M."/>
            <person name="Browse J."/>
        </authorList>
    </citation>
    <scope>FUNCTION</scope>
    <scope>CATALYTIC ACTIVITY</scope>
    <scope>DISRUPTION PHENOTYPE</scope>
    <scope>BIOPHYSICOCHEMICAL PROPERTIES</scope>
    <source>
        <strain>cv. Columbia</strain>
    </source>
</reference>
<reference key="6">
    <citation type="journal article" date="2012" name="Plant Physiol.">
        <title>The phosphatidylcholine diacylglycerol cholinephosphotransferase is required for efficient hydroxy fatty acid accumulation in transgenic Arabidopsis.</title>
        <authorList>
            <person name="Hu Z."/>
            <person name="Ren Z."/>
            <person name="Lu C."/>
        </authorList>
    </citation>
    <scope>FUNCTION</scope>
    <source>
        <strain>cv. Columbia</strain>
    </source>
</reference>
<reference key="7">
    <citation type="journal article" date="2012" name="Plant Physiol.">
        <title>Acyl editing and headgroup exchange are the major mechanisms that direct polyunsaturated fatty acid flux into triacylglycerols.</title>
        <authorList>
            <person name="Bates P.D."/>
            <person name="Fatihi A."/>
            <person name="Snapp A.R."/>
            <person name="Carlsson A.S."/>
            <person name="Browse J."/>
            <person name="Lu C."/>
        </authorList>
    </citation>
    <scope>FUNCTION</scope>
    <scope>DISRUPTION PHENOTYPE</scope>
    <source>
        <strain>cv. Columbia</strain>
    </source>
</reference>
<organism>
    <name type="scientific">Arabidopsis thaliana</name>
    <name type="common">Mouse-ear cress</name>
    <dbReference type="NCBI Taxonomy" id="3702"/>
    <lineage>
        <taxon>Eukaryota</taxon>
        <taxon>Viridiplantae</taxon>
        <taxon>Streptophyta</taxon>
        <taxon>Embryophyta</taxon>
        <taxon>Tracheophyta</taxon>
        <taxon>Spermatophyta</taxon>
        <taxon>Magnoliopsida</taxon>
        <taxon>eudicotyledons</taxon>
        <taxon>Gunneridae</taxon>
        <taxon>Pentapetalae</taxon>
        <taxon>rosids</taxon>
        <taxon>malvids</taxon>
        <taxon>Brassicales</taxon>
        <taxon>Brassicaceae</taxon>
        <taxon>Camelineae</taxon>
        <taxon>Arabidopsis</taxon>
    </lineage>
</organism>
<gene>
    <name evidence="7" type="primary">ROD1</name>
    <name evidence="9" type="ordered locus">At3g15820</name>
    <name evidence="10" type="ORF">MSJ11.22</name>
</gene>
<keyword id="KW-0443">Lipid metabolism</keyword>
<keyword id="KW-0472">Membrane</keyword>
<keyword id="KW-1185">Reference proteome</keyword>
<keyword id="KW-0808">Transferase</keyword>
<keyword id="KW-0812">Transmembrane</keyword>
<keyword id="KW-1133">Transmembrane helix</keyword>
<name>PDCT1_ARATH</name>
<proteinExistence type="evidence at protein level"/>
<feature type="chain" id="PRO_0000425110" description="Phosphatidylcholine:diacylglycerol cholinephosphotransferase 1">
    <location>
        <begin position="1"/>
        <end position="301"/>
    </location>
</feature>
<feature type="transmembrane region" description="Helical" evidence="2">
    <location>
        <begin position="88"/>
        <end position="108"/>
    </location>
</feature>
<feature type="transmembrane region" description="Helical" evidence="2">
    <location>
        <begin position="141"/>
        <end position="161"/>
    </location>
</feature>
<feature type="transmembrane region" description="Helical" evidence="2">
    <location>
        <begin position="171"/>
        <end position="191"/>
    </location>
</feature>
<feature type="transmembrane region" description="Helical" evidence="2">
    <location>
        <begin position="202"/>
        <end position="222"/>
    </location>
</feature>
<feature type="transmembrane region" description="Helical" evidence="2">
    <location>
        <begin position="255"/>
        <end position="275"/>
    </location>
</feature>
<feature type="region of interest" description="Disordered" evidence="3">
    <location>
        <begin position="1"/>
        <end position="39"/>
    </location>
</feature>
<feature type="active site" evidence="1">
    <location>
        <position position="216"/>
    </location>
</feature>
<feature type="active site" evidence="1">
    <location>
        <position position="256"/>
    </location>
</feature>
<feature type="active site" evidence="1">
    <location>
        <position position="260"/>
    </location>
</feature>
<feature type="sequence conflict" description="In Ref. 3; AAK49592." evidence="8" ref="3">
    <original>M</original>
    <variation>I</variation>
    <location>
        <position position="1"/>
    </location>
</feature>